<name>ENGB_CLOBB</name>
<evidence type="ECO:0000255" key="1">
    <source>
        <dbReference type="HAMAP-Rule" id="MF_00321"/>
    </source>
</evidence>
<feature type="chain" id="PRO_1000115965" description="Probable GTP-binding protein EngB">
    <location>
        <begin position="1"/>
        <end position="198"/>
    </location>
</feature>
<feature type="domain" description="EngB-type G" evidence="1">
    <location>
        <begin position="22"/>
        <end position="195"/>
    </location>
</feature>
<feature type="binding site" evidence="1">
    <location>
        <begin position="30"/>
        <end position="37"/>
    </location>
    <ligand>
        <name>GTP</name>
        <dbReference type="ChEBI" id="CHEBI:37565"/>
    </ligand>
</feature>
<feature type="binding site" evidence="1">
    <location>
        <position position="37"/>
    </location>
    <ligand>
        <name>Mg(2+)</name>
        <dbReference type="ChEBI" id="CHEBI:18420"/>
    </ligand>
</feature>
<feature type="binding site" evidence="1">
    <location>
        <begin position="57"/>
        <end position="61"/>
    </location>
    <ligand>
        <name>GTP</name>
        <dbReference type="ChEBI" id="CHEBI:37565"/>
    </ligand>
</feature>
<feature type="binding site" evidence="1">
    <location>
        <position position="59"/>
    </location>
    <ligand>
        <name>Mg(2+)</name>
        <dbReference type="ChEBI" id="CHEBI:18420"/>
    </ligand>
</feature>
<feature type="binding site" evidence="1">
    <location>
        <begin position="75"/>
        <end position="78"/>
    </location>
    <ligand>
        <name>GTP</name>
        <dbReference type="ChEBI" id="CHEBI:37565"/>
    </ligand>
</feature>
<feature type="binding site" evidence="1">
    <location>
        <begin position="142"/>
        <end position="145"/>
    </location>
    <ligand>
        <name>GTP</name>
        <dbReference type="ChEBI" id="CHEBI:37565"/>
    </ligand>
</feature>
<feature type="binding site" evidence="1">
    <location>
        <begin position="174"/>
        <end position="176"/>
    </location>
    <ligand>
        <name>GTP</name>
        <dbReference type="ChEBI" id="CHEBI:37565"/>
    </ligand>
</feature>
<organism>
    <name type="scientific">Clostridium botulinum (strain Eklund 17B / Type B)</name>
    <dbReference type="NCBI Taxonomy" id="935198"/>
    <lineage>
        <taxon>Bacteria</taxon>
        <taxon>Bacillati</taxon>
        <taxon>Bacillota</taxon>
        <taxon>Clostridia</taxon>
        <taxon>Eubacteriales</taxon>
        <taxon>Clostridiaceae</taxon>
        <taxon>Clostridium</taxon>
    </lineage>
</organism>
<gene>
    <name evidence="1" type="primary">engB</name>
    <name type="ordered locus">CLL_A2886</name>
</gene>
<accession>B2TPB6</accession>
<proteinExistence type="inferred from homology"/>
<reference key="1">
    <citation type="submission" date="2008-04" db="EMBL/GenBank/DDBJ databases">
        <title>Complete sequence of Clostridium botulinum strain Eklund.</title>
        <authorList>
            <person name="Brinkac L.M."/>
            <person name="Brown J.L."/>
            <person name="Bruce D."/>
            <person name="Detter C."/>
            <person name="Munk C."/>
            <person name="Smith L.A."/>
            <person name="Smith T.J."/>
            <person name="Sutton G."/>
            <person name="Brettin T.S."/>
        </authorList>
    </citation>
    <scope>NUCLEOTIDE SEQUENCE [LARGE SCALE GENOMIC DNA]</scope>
    <source>
        <strain>Eklund 17B / Type B</strain>
    </source>
</reference>
<dbReference type="EMBL" id="CP001056">
    <property type="protein sequence ID" value="ACD24556.1"/>
    <property type="molecule type" value="Genomic_DNA"/>
</dbReference>
<dbReference type="SMR" id="B2TPB6"/>
<dbReference type="KEGG" id="cbk:CLL_A2886"/>
<dbReference type="PATRIC" id="fig|935198.13.peg.2848"/>
<dbReference type="HOGENOM" id="CLU_033732_3_0_9"/>
<dbReference type="Proteomes" id="UP000001195">
    <property type="component" value="Chromosome"/>
</dbReference>
<dbReference type="GO" id="GO:0005829">
    <property type="term" value="C:cytosol"/>
    <property type="evidence" value="ECO:0007669"/>
    <property type="project" value="TreeGrafter"/>
</dbReference>
<dbReference type="GO" id="GO:0005525">
    <property type="term" value="F:GTP binding"/>
    <property type="evidence" value="ECO:0007669"/>
    <property type="project" value="UniProtKB-UniRule"/>
</dbReference>
<dbReference type="GO" id="GO:0046872">
    <property type="term" value="F:metal ion binding"/>
    <property type="evidence" value="ECO:0007669"/>
    <property type="project" value="UniProtKB-KW"/>
</dbReference>
<dbReference type="GO" id="GO:0000917">
    <property type="term" value="P:division septum assembly"/>
    <property type="evidence" value="ECO:0007669"/>
    <property type="project" value="UniProtKB-KW"/>
</dbReference>
<dbReference type="CDD" id="cd01876">
    <property type="entry name" value="YihA_EngB"/>
    <property type="match status" value="1"/>
</dbReference>
<dbReference type="FunFam" id="3.40.50.300:FF:000098">
    <property type="entry name" value="Probable GTP-binding protein EngB"/>
    <property type="match status" value="1"/>
</dbReference>
<dbReference type="Gene3D" id="3.40.50.300">
    <property type="entry name" value="P-loop containing nucleotide triphosphate hydrolases"/>
    <property type="match status" value="1"/>
</dbReference>
<dbReference type="HAMAP" id="MF_00321">
    <property type="entry name" value="GTPase_EngB"/>
    <property type="match status" value="1"/>
</dbReference>
<dbReference type="InterPro" id="IPR030393">
    <property type="entry name" value="G_ENGB_dom"/>
</dbReference>
<dbReference type="InterPro" id="IPR006073">
    <property type="entry name" value="GTP-bd"/>
</dbReference>
<dbReference type="InterPro" id="IPR019987">
    <property type="entry name" value="GTP-bd_ribosome_bio_YsxC"/>
</dbReference>
<dbReference type="InterPro" id="IPR027417">
    <property type="entry name" value="P-loop_NTPase"/>
</dbReference>
<dbReference type="NCBIfam" id="TIGR03598">
    <property type="entry name" value="GTPase_YsxC"/>
    <property type="match status" value="1"/>
</dbReference>
<dbReference type="PANTHER" id="PTHR11649:SF13">
    <property type="entry name" value="ENGB-TYPE G DOMAIN-CONTAINING PROTEIN"/>
    <property type="match status" value="1"/>
</dbReference>
<dbReference type="PANTHER" id="PTHR11649">
    <property type="entry name" value="MSS1/TRME-RELATED GTP-BINDING PROTEIN"/>
    <property type="match status" value="1"/>
</dbReference>
<dbReference type="Pfam" id="PF01926">
    <property type="entry name" value="MMR_HSR1"/>
    <property type="match status" value="1"/>
</dbReference>
<dbReference type="SUPFAM" id="SSF52540">
    <property type="entry name" value="P-loop containing nucleoside triphosphate hydrolases"/>
    <property type="match status" value="1"/>
</dbReference>
<dbReference type="PROSITE" id="PS51706">
    <property type="entry name" value="G_ENGB"/>
    <property type="match status" value="1"/>
</dbReference>
<comment type="function">
    <text evidence="1">Necessary for normal cell division and for the maintenance of normal septation.</text>
</comment>
<comment type="cofactor">
    <cofactor evidence="1">
        <name>Mg(2+)</name>
        <dbReference type="ChEBI" id="CHEBI:18420"/>
    </cofactor>
</comment>
<comment type="similarity">
    <text evidence="1">Belongs to the TRAFAC class TrmE-Era-EngA-EngB-Septin-like GTPase superfamily. EngB GTPase family.</text>
</comment>
<keyword id="KW-0131">Cell cycle</keyword>
<keyword id="KW-0132">Cell division</keyword>
<keyword id="KW-0342">GTP-binding</keyword>
<keyword id="KW-0460">Magnesium</keyword>
<keyword id="KW-0479">Metal-binding</keyword>
<keyword id="KW-0547">Nucleotide-binding</keyword>
<keyword id="KW-0717">Septation</keyword>
<protein>
    <recommendedName>
        <fullName evidence="1">Probable GTP-binding protein EngB</fullName>
    </recommendedName>
</protein>
<sequence length="198" mass="22864">MRIKQSEFIISAVKPHQYPIDHRNEVAFVGRSNVGKSSLINSLTNRKKLAKVSGTPGKTRLINFFLINNDFYLVDLPGYGYAKVSKSEKDTWGKTIETYLSHREELKRIVCLVDSRHKPTGDDIMMYEWAKHFGYDVVVVATKSDKLKNAEFKKSEKLIRETLNLTKDDKLYFYSSLNKKGTEELIDKLFLEFATDID</sequence>